<comment type="catalytic activity">
    <reaction>
        <text>an acyl phosphate + H2O = a carboxylate + phosphate + H(+)</text>
        <dbReference type="Rhea" id="RHEA:14965"/>
        <dbReference type="ChEBI" id="CHEBI:15377"/>
        <dbReference type="ChEBI" id="CHEBI:15378"/>
        <dbReference type="ChEBI" id="CHEBI:29067"/>
        <dbReference type="ChEBI" id="CHEBI:43474"/>
        <dbReference type="ChEBI" id="CHEBI:59918"/>
        <dbReference type="EC" id="3.6.1.7"/>
    </reaction>
</comment>
<comment type="similarity">
    <text evidence="2">Belongs to the acylphosphatase family.</text>
</comment>
<keyword id="KW-0378">Hydrolase</keyword>
<proteinExistence type="inferred from homology"/>
<accession>Q1BAM3</accession>
<name>ACYP_MYCSS</name>
<organism>
    <name type="scientific">Mycobacterium sp. (strain MCS)</name>
    <dbReference type="NCBI Taxonomy" id="164756"/>
    <lineage>
        <taxon>Bacteria</taxon>
        <taxon>Bacillati</taxon>
        <taxon>Actinomycetota</taxon>
        <taxon>Actinomycetes</taxon>
        <taxon>Mycobacteriales</taxon>
        <taxon>Mycobacteriaceae</taxon>
        <taxon>Mycobacterium</taxon>
    </lineage>
</organism>
<protein>
    <recommendedName>
        <fullName>Acylphosphatase</fullName>
        <ecNumber>3.6.1.7</ecNumber>
    </recommendedName>
    <alternativeName>
        <fullName>Acylphosphate phosphohydrolase</fullName>
    </alternativeName>
</protein>
<sequence length="94" mass="10460">MSAEPEVRLTAWVHGRVQGVGFRWWTRSRALELGLTGFAANKPDGRVQVVAQGSREDCERLLGLLEGGDTPGRVDKVIADWSDAREQITGFHER</sequence>
<feature type="chain" id="PRO_0000326753" description="Acylphosphatase">
    <location>
        <begin position="1"/>
        <end position="94"/>
    </location>
</feature>
<feature type="domain" description="Acylphosphatase-like" evidence="1">
    <location>
        <begin position="8"/>
        <end position="94"/>
    </location>
</feature>
<feature type="active site" evidence="1">
    <location>
        <position position="23"/>
    </location>
</feature>
<feature type="active site" evidence="1">
    <location>
        <position position="41"/>
    </location>
</feature>
<gene>
    <name type="primary">acyP</name>
    <name type="ordered locus">Mmcs_1952</name>
</gene>
<dbReference type="EC" id="3.6.1.7"/>
<dbReference type="EMBL" id="CP000384">
    <property type="protein sequence ID" value="ABG08061.1"/>
    <property type="molecule type" value="Genomic_DNA"/>
</dbReference>
<dbReference type="SMR" id="Q1BAM3"/>
<dbReference type="KEGG" id="mmc:Mmcs_1952"/>
<dbReference type="HOGENOM" id="CLU_141932_3_0_11"/>
<dbReference type="BioCyc" id="MSP164756:G1G6O-1997-MONOMER"/>
<dbReference type="GO" id="GO:0003998">
    <property type="term" value="F:acylphosphatase activity"/>
    <property type="evidence" value="ECO:0007669"/>
    <property type="project" value="UniProtKB-EC"/>
</dbReference>
<dbReference type="Gene3D" id="3.30.70.100">
    <property type="match status" value="1"/>
</dbReference>
<dbReference type="InterPro" id="IPR020456">
    <property type="entry name" value="Acylphosphatase"/>
</dbReference>
<dbReference type="InterPro" id="IPR001792">
    <property type="entry name" value="Acylphosphatase-like_dom"/>
</dbReference>
<dbReference type="InterPro" id="IPR036046">
    <property type="entry name" value="Acylphosphatase-like_dom_sf"/>
</dbReference>
<dbReference type="InterPro" id="IPR017968">
    <property type="entry name" value="Acylphosphatase_CS"/>
</dbReference>
<dbReference type="NCBIfam" id="NF010997">
    <property type="entry name" value="PRK14422.1"/>
    <property type="match status" value="1"/>
</dbReference>
<dbReference type="PANTHER" id="PTHR47268">
    <property type="entry name" value="ACYLPHOSPHATASE"/>
    <property type="match status" value="1"/>
</dbReference>
<dbReference type="PANTHER" id="PTHR47268:SF4">
    <property type="entry name" value="ACYLPHOSPHATASE"/>
    <property type="match status" value="1"/>
</dbReference>
<dbReference type="Pfam" id="PF00708">
    <property type="entry name" value="Acylphosphatase"/>
    <property type="match status" value="1"/>
</dbReference>
<dbReference type="SUPFAM" id="SSF54975">
    <property type="entry name" value="Acylphosphatase/BLUF domain-like"/>
    <property type="match status" value="1"/>
</dbReference>
<dbReference type="PROSITE" id="PS00150">
    <property type="entry name" value="ACYLPHOSPHATASE_1"/>
    <property type="match status" value="1"/>
</dbReference>
<dbReference type="PROSITE" id="PS00151">
    <property type="entry name" value="ACYLPHOSPHATASE_2"/>
    <property type="match status" value="1"/>
</dbReference>
<dbReference type="PROSITE" id="PS51160">
    <property type="entry name" value="ACYLPHOSPHATASE_3"/>
    <property type="match status" value="1"/>
</dbReference>
<evidence type="ECO:0000255" key="1">
    <source>
        <dbReference type="PROSITE-ProRule" id="PRU00520"/>
    </source>
</evidence>
<evidence type="ECO:0000305" key="2"/>
<reference key="1">
    <citation type="submission" date="2006-06" db="EMBL/GenBank/DDBJ databases">
        <title>Complete sequence of chromosome of Mycobacterium sp. MCS.</title>
        <authorList>
            <consortium name="US DOE Joint Genome Institute"/>
            <person name="Copeland A."/>
            <person name="Lucas S."/>
            <person name="Lapidus A."/>
            <person name="Barry K."/>
            <person name="Detter J.C."/>
            <person name="Glavina del Rio T."/>
            <person name="Hammon N."/>
            <person name="Israni S."/>
            <person name="Dalin E."/>
            <person name="Tice H."/>
            <person name="Pitluck S."/>
            <person name="Martinez M."/>
            <person name="Schmutz J."/>
            <person name="Larimer F."/>
            <person name="Land M."/>
            <person name="Hauser L."/>
            <person name="Kyrpides N."/>
            <person name="Kim E."/>
            <person name="Miller C.D."/>
            <person name="Hughes J.E."/>
            <person name="Anderson A.J."/>
            <person name="Sims R.C."/>
            <person name="Richardson P."/>
        </authorList>
    </citation>
    <scope>NUCLEOTIDE SEQUENCE [LARGE SCALE GENOMIC DNA]</scope>
    <source>
        <strain>MCS</strain>
    </source>
</reference>